<evidence type="ECO:0000255" key="1">
    <source>
        <dbReference type="HAMAP-Rule" id="MF_00446"/>
    </source>
</evidence>
<dbReference type="EC" id="4.1.1.11" evidence="1"/>
<dbReference type="EMBL" id="CP000749">
    <property type="protein sequence ID" value="ABR70192.1"/>
    <property type="molecule type" value="Genomic_DNA"/>
</dbReference>
<dbReference type="SMR" id="A6VUR3"/>
<dbReference type="STRING" id="400668.Mmwyl1_1263"/>
<dbReference type="KEGG" id="mmw:Mmwyl1_1263"/>
<dbReference type="eggNOG" id="COG0853">
    <property type="taxonomic scope" value="Bacteria"/>
</dbReference>
<dbReference type="HOGENOM" id="CLU_115305_2_1_6"/>
<dbReference type="OrthoDB" id="9803983at2"/>
<dbReference type="UniPathway" id="UPA00028">
    <property type="reaction ID" value="UER00002"/>
</dbReference>
<dbReference type="GO" id="GO:0005829">
    <property type="term" value="C:cytosol"/>
    <property type="evidence" value="ECO:0007669"/>
    <property type="project" value="TreeGrafter"/>
</dbReference>
<dbReference type="GO" id="GO:0004068">
    <property type="term" value="F:aspartate 1-decarboxylase activity"/>
    <property type="evidence" value="ECO:0007669"/>
    <property type="project" value="UniProtKB-UniRule"/>
</dbReference>
<dbReference type="GO" id="GO:0006523">
    <property type="term" value="P:alanine biosynthetic process"/>
    <property type="evidence" value="ECO:0007669"/>
    <property type="project" value="InterPro"/>
</dbReference>
<dbReference type="GO" id="GO:0015940">
    <property type="term" value="P:pantothenate biosynthetic process"/>
    <property type="evidence" value="ECO:0007669"/>
    <property type="project" value="UniProtKB-UniRule"/>
</dbReference>
<dbReference type="CDD" id="cd06919">
    <property type="entry name" value="Asp_decarbox"/>
    <property type="match status" value="1"/>
</dbReference>
<dbReference type="Gene3D" id="2.40.40.20">
    <property type="match status" value="1"/>
</dbReference>
<dbReference type="HAMAP" id="MF_00446">
    <property type="entry name" value="PanD"/>
    <property type="match status" value="1"/>
</dbReference>
<dbReference type="InterPro" id="IPR009010">
    <property type="entry name" value="Asp_de-COase-like_dom_sf"/>
</dbReference>
<dbReference type="InterPro" id="IPR003190">
    <property type="entry name" value="Asp_decarbox"/>
</dbReference>
<dbReference type="NCBIfam" id="TIGR00223">
    <property type="entry name" value="panD"/>
    <property type="match status" value="1"/>
</dbReference>
<dbReference type="PANTHER" id="PTHR21012">
    <property type="entry name" value="ASPARTATE 1-DECARBOXYLASE"/>
    <property type="match status" value="1"/>
</dbReference>
<dbReference type="PANTHER" id="PTHR21012:SF0">
    <property type="entry name" value="ASPARTATE 1-DECARBOXYLASE"/>
    <property type="match status" value="1"/>
</dbReference>
<dbReference type="Pfam" id="PF02261">
    <property type="entry name" value="Asp_decarbox"/>
    <property type="match status" value="1"/>
</dbReference>
<dbReference type="PIRSF" id="PIRSF006246">
    <property type="entry name" value="Asp_decarbox"/>
    <property type="match status" value="1"/>
</dbReference>
<dbReference type="SUPFAM" id="SSF50692">
    <property type="entry name" value="ADC-like"/>
    <property type="match status" value="1"/>
</dbReference>
<organism>
    <name type="scientific">Marinomonas sp. (strain MWYL1)</name>
    <dbReference type="NCBI Taxonomy" id="400668"/>
    <lineage>
        <taxon>Bacteria</taxon>
        <taxon>Pseudomonadati</taxon>
        <taxon>Pseudomonadota</taxon>
        <taxon>Gammaproteobacteria</taxon>
        <taxon>Oceanospirillales</taxon>
        <taxon>Oceanospirillaceae</taxon>
        <taxon>Marinomonas</taxon>
    </lineage>
</organism>
<gene>
    <name evidence="1" type="primary">panD</name>
    <name type="ordered locus">Mmwyl1_1263</name>
</gene>
<name>PAND_MARMS</name>
<feature type="chain" id="PRO_1000080922" description="Aspartate 1-decarboxylase beta chain" evidence="1">
    <location>
        <begin position="1"/>
        <end position="24"/>
    </location>
</feature>
<feature type="chain" id="PRO_1000080923" description="Aspartate 1-decarboxylase alpha chain" evidence="1">
    <location>
        <begin position="25"/>
        <end position="126"/>
    </location>
</feature>
<feature type="active site" description="Schiff-base intermediate with substrate; via pyruvic acid" evidence="1">
    <location>
        <position position="25"/>
    </location>
</feature>
<feature type="active site" description="Proton donor" evidence="1">
    <location>
        <position position="58"/>
    </location>
</feature>
<feature type="binding site" evidence="1">
    <location>
        <position position="57"/>
    </location>
    <ligand>
        <name>substrate</name>
    </ligand>
</feature>
<feature type="binding site" evidence="1">
    <location>
        <begin position="73"/>
        <end position="75"/>
    </location>
    <ligand>
        <name>substrate</name>
    </ligand>
</feature>
<feature type="modified residue" description="Pyruvic acid (Ser)" evidence="1">
    <location>
        <position position="25"/>
    </location>
</feature>
<proteinExistence type="inferred from homology"/>
<accession>A6VUR3</accession>
<protein>
    <recommendedName>
        <fullName evidence="1">Aspartate 1-decarboxylase</fullName>
        <ecNumber evidence="1">4.1.1.11</ecNumber>
    </recommendedName>
    <alternativeName>
        <fullName evidence="1">Aspartate alpha-decarboxylase</fullName>
    </alternativeName>
    <component>
        <recommendedName>
            <fullName evidence="1">Aspartate 1-decarboxylase beta chain</fullName>
        </recommendedName>
    </component>
    <component>
        <recommendedName>
            <fullName evidence="1">Aspartate 1-decarboxylase alpha chain</fullName>
        </recommendedName>
    </component>
</protein>
<comment type="function">
    <text evidence="1">Catalyzes the pyruvoyl-dependent decarboxylation of aspartate to produce beta-alanine.</text>
</comment>
<comment type="catalytic activity">
    <reaction evidence="1">
        <text>L-aspartate + H(+) = beta-alanine + CO2</text>
        <dbReference type="Rhea" id="RHEA:19497"/>
        <dbReference type="ChEBI" id="CHEBI:15378"/>
        <dbReference type="ChEBI" id="CHEBI:16526"/>
        <dbReference type="ChEBI" id="CHEBI:29991"/>
        <dbReference type="ChEBI" id="CHEBI:57966"/>
        <dbReference type="EC" id="4.1.1.11"/>
    </reaction>
</comment>
<comment type="cofactor">
    <cofactor evidence="1">
        <name>pyruvate</name>
        <dbReference type="ChEBI" id="CHEBI:15361"/>
    </cofactor>
    <text evidence="1">Binds 1 pyruvoyl group covalently per subunit.</text>
</comment>
<comment type="pathway">
    <text evidence="1">Cofactor biosynthesis; (R)-pantothenate biosynthesis; beta-alanine from L-aspartate: step 1/1.</text>
</comment>
<comment type="subunit">
    <text evidence="1">Heterooctamer of four alpha and four beta subunits.</text>
</comment>
<comment type="subcellular location">
    <subcellularLocation>
        <location evidence="1">Cytoplasm</location>
    </subcellularLocation>
</comment>
<comment type="PTM">
    <text evidence="1">Is synthesized initially as an inactive proenzyme, which is activated by self-cleavage at a specific serine bond to produce a beta-subunit with a hydroxyl group at its C-terminus and an alpha-subunit with a pyruvoyl group at its N-terminus.</text>
</comment>
<comment type="similarity">
    <text evidence="1">Belongs to the PanD family.</text>
</comment>
<keyword id="KW-0068">Autocatalytic cleavage</keyword>
<keyword id="KW-0963">Cytoplasm</keyword>
<keyword id="KW-0210">Decarboxylase</keyword>
<keyword id="KW-0456">Lyase</keyword>
<keyword id="KW-0566">Pantothenate biosynthesis</keyword>
<keyword id="KW-0670">Pyruvate</keyword>
<keyword id="KW-0704">Schiff base</keyword>
<keyword id="KW-0865">Zymogen</keyword>
<sequence length="126" mass="14031">MQITLLKGKLHMASVTQAELWYDGSCAIDKDLVELAGFREFEQIDIYNVDNGERFHTYVILAESGSGTISMNGAAARKVQVGDRVIIAAYGQMNEAEADEFKPKLVYLNKDNSVERTTNTIPVQKD</sequence>
<reference key="1">
    <citation type="submission" date="2007-06" db="EMBL/GenBank/DDBJ databases">
        <title>Complete sequence of Marinomonas sp. MWYL1.</title>
        <authorList>
            <consortium name="US DOE Joint Genome Institute"/>
            <person name="Copeland A."/>
            <person name="Lucas S."/>
            <person name="Lapidus A."/>
            <person name="Barry K."/>
            <person name="Glavina del Rio T."/>
            <person name="Dalin E."/>
            <person name="Tice H."/>
            <person name="Pitluck S."/>
            <person name="Kiss H."/>
            <person name="Brettin T."/>
            <person name="Bruce D."/>
            <person name="Detter J.C."/>
            <person name="Han C."/>
            <person name="Schmutz J."/>
            <person name="Larimer F."/>
            <person name="Land M."/>
            <person name="Hauser L."/>
            <person name="Kyrpides N."/>
            <person name="Kim E."/>
            <person name="Johnston A.W.B."/>
            <person name="Todd J.D."/>
            <person name="Rogers R."/>
            <person name="Wexler M."/>
            <person name="Bond P.L."/>
            <person name="Li Y."/>
            <person name="Richardson P."/>
        </authorList>
    </citation>
    <scope>NUCLEOTIDE SEQUENCE [LARGE SCALE GENOMIC DNA]</scope>
    <source>
        <strain>MWYL1</strain>
    </source>
</reference>